<name>RCAC_MICDP</name>
<feature type="chain" id="PRO_0000081207" description="Protein RcaC">
    <location>
        <begin position="1"/>
        <end position="651"/>
    </location>
</feature>
<feature type="domain" description="Response regulatory 1" evidence="1">
    <location>
        <begin position="2"/>
        <end position="116"/>
    </location>
</feature>
<feature type="domain" description="Response regulatory 2" evidence="1">
    <location>
        <begin position="384"/>
        <end position="519"/>
    </location>
</feature>
<feature type="domain" description="Response regulatory 3" evidence="1">
    <location>
        <begin position="527"/>
        <end position="643"/>
    </location>
</feature>
<feature type="DNA-binding region" description="OmpR/PhoB-type" evidence="2">
    <location>
        <begin position="124"/>
        <end position="223"/>
    </location>
</feature>
<feature type="modified residue" description="4-aspartylphosphate" evidence="1">
    <location>
        <position position="51"/>
    </location>
</feature>
<gene>
    <name type="primary">rcaC</name>
</gene>
<protein>
    <recommendedName>
        <fullName>Protein RcaC</fullName>
    </recommendedName>
</protein>
<organism>
    <name type="scientific">Microchaete diplosiphon</name>
    <name type="common">Fremyella diplosiphon</name>
    <dbReference type="NCBI Taxonomy" id="1197"/>
    <lineage>
        <taxon>Bacteria</taxon>
        <taxon>Bacillati</taxon>
        <taxon>Cyanobacteriota</taxon>
        <taxon>Cyanophyceae</taxon>
        <taxon>Nostocales</taxon>
        <taxon>Rivulariaceae</taxon>
        <taxon>Microchaete</taxon>
    </lineage>
</organism>
<dbReference type="EMBL" id="M95680">
    <property type="protein sequence ID" value="AAA24892.1"/>
    <property type="molecule type" value="Genomic_DNA"/>
</dbReference>
<dbReference type="PIR" id="A47210">
    <property type="entry name" value="A47210"/>
</dbReference>
<dbReference type="PIR" id="S27576">
    <property type="entry name" value="S27576"/>
</dbReference>
<dbReference type="SMR" id="Q01473"/>
<dbReference type="GO" id="GO:0005829">
    <property type="term" value="C:cytosol"/>
    <property type="evidence" value="ECO:0007669"/>
    <property type="project" value="TreeGrafter"/>
</dbReference>
<dbReference type="GO" id="GO:0032993">
    <property type="term" value="C:protein-DNA complex"/>
    <property type="evidence" value="ECO:0007669"/>
    <property type="project" value="TreeGrafter"/>
</dbReference>
<dbReference type="GO" id="GO:0000156">
    <property type="term" value="F:phosphorelay response regulator activity"/>
    <property type="evidence" value="ECO:0007669"/>
    <property type="project" value="TreeGrafter"/>
</dbReference>
<dbReference type="GO" id="GO:0000976">
    <property type="term" value="F:transcription cis-regulatory region binding"/>
    <property type="evidence" value="ECO:0007669"/>
    <property type="project" value="TreeGrafter"/>
</dbReference>
<dbReference type="GO" id="GO:0006355">
    <property type="term" value="P:regulation of DNA-templated transcription"/>
    <property type="evidence" value="ECO:0007669"/>
    <property type="project" value="InterPro"/>
</dbReference>
<dbReference type="CDD" id="cd17574">
    <property type="entry name" value="REC_OmpR"/>
    <property type="match status" value="1"/>
</dbReference>
<dbReference type="CDD" id="cd19935">
    <property type="entry name" value="REC_OmpR_CusR-like"/>
    <property type="match status" value="1"/>
</dbReference>
<dbReference type="CDD" id="cd00383">
    <property type="entry name" value="trans_reg_C"/>
    <property type="match status" value="1"/>
</dbReference>
<dbReference type="FunFam" id="3.40.50.2300:FF:000002">
    <property type="entry name" value="DNA-binding response regulator PhoP"/>
    <property type="match status" value="1"/>
</dbReference>
<dbReference type="Gene3D" id="3.40.50.2300">
    <property type="match status" value="3"/>
</dbReference>
<dbReference type="Gene3D" id="6.10.250.690">
    <property type="match status" value="1"/>
</dbReference>
<dbReference type="Gene3D" id="1.10.10.10">
    <property type="entry name" value="Winged helix-like DNA-binding domain superfamily/Winged helix DNA-binding domain"/>
    <property type="match status" value="1"/>
</dbReference>
<dbReference type="InterPro" id="IPR011006">
    <property type="entry name" value="CheY-like_superfamily"/>
</dbReference>
<dbReference type="InterPro" id="IPR036641">
    <property type="entry name" value="HPT_dom_sf"/>
</dbReference>
<dbReference type="InterPro" id="IPR001867">
    <property type="entry name" value="OmpR/PhoB-type_DNA-bd"/>
</dbReference>
<dbReference type="InterPro" id="IPR008207">
    <property type="entry name" value="Sig_transdc_His_kin_Hpt_dom"/>
</dbReference>
<dbReference type="InterPro" id="IPR016032">
    <property type="entry name" value="Sig_transdc_resp-reg_C-effctor"/>
</dbReference>
<dbReference type="InterPro" id="IPR001789">
    <property type="entry name" value="Sig_transdc_resp-reg_receiver"/>
</dbReference>
<dbReference type="InterPro" id="IPR039420">
    <property type="entry name" value="WalR-like"/>
</dbReference>
<dbReference type="InterPro" id="IPR036388">
    <property type="entry name" value="WH-like_DNA-bd_sf"/>
</dbReference>
<dbReference type="PANTHER" id="PTHR48111">
    <property type="entry name" value="REGULATOR OF RPOS"/>
    <property type="match status" value="1"/>
</dbReference>
<dbReference type="PANTHER" id="PTHR48111:SF1">
    <property type="entry name" value="TWO-COMPONENT RESPONSE REGULATOR ORR33"/>
    <property type="match status" value="1"/>
</dbReference>
<dbReference type="Pfam" id="PF01627">
    <property type="entry name" value="Hpt"/>
    <property type="match status" value="1"/>
</dbReference>
<dbReference type="Pfam" id="PF00072">
    <property type="entry name" value="Response_reg"/>
    <property type="match status" value="2"/>
</dbReference>
<dbReference type="Pfam" id="PF00486">
    <property type="entry name" value="Trans_reg_C"/>
    <property type="match status" value="1"/>
</dbReference>
<dbReference type="SMART" id="SM00448">
    <property type="entry name" value="REC"/>
    <property type="match status" value="3"/>
</dbReference>
<dbReference type="SMART" id="SM00862">
    <property type="entry name" value="Trans_reg_C"/>
    <property type="match status" value="1"/>
</dbReference>
<dbReference type="SUPFAM" id="SSF46894">
    <property type="entry name" value="C-terminal effector domain of the bipartite response regulators"/>
    <property type="match status" value="1"/>
</dbReference>
<dbReference type="SUPFAM" id="SSF52172">
    <property type="entry name" value="CheY-like"/>
    <property type="match status" value="3"/>
</dbReference>
<dbReference type="SUPFAM" id="SSF47226">
    <property type="entry name" value="Histidine-containing phosphotransfer domain, HPT domain"/>
    <property type="match status" value="1"/>
</dbReference>
<dbReference type="PROSITE" id="PS51755">
    <property type="entry name" value="OMPR_PHOB"/>
    <property type="match status" value="1"/>
</dbReference>
<dbReference type="PROSITE" id="PS50110">
    <property type="entry name" value="RESPONSE_REGULATORY"/>
    <property type="match status" value="3"/>
</dbReference>
<proteinExistence type="inferred from homology"/>
<keyword id="KW-0010">Activator</keyword>
<keyword id="KW-0238">DNA-binding</keyword>
<keyword id="KW-0597">Phosphoprotein</keyword>
<keyword id="KW-0677">Repeat</keyword>
<keyword id="KW-0804">Transcription</keyword>
<keyword id="KW-0805">Transcription regulation</keyword>
<keyword id="KW-0902">Two-component regulatory system</keyword>
<sequence>MKILLVEDDDVLIKVLTKNLTTHHYIVDVVKDGEMGWTYGSTFEYDLIILDIMLPNLDGISLCKRFRAQGYTVPILLLTAQDNITAKVQGLDAGADDYVVKPFDPIELIARIRALLRRGSNNPFPLLTWGDLLLNPSTCEVTYNGCPLNLTTMEYDLLELLLRNCQHVFSSEELLDKLWSSEDFPSEATVRSHVRRLRHKLVAAGAPHDFIATMHGRGYYLKAPSTEEVNNLSVTPENNSHSAAVIVKSRETESDRPQHLIPSDSQQQYLAFLNETWTRTKPQSLDQMGILLQIVRDLQTNQLTPQQQTQAQHVAHKLAGTLGIFGLTKTMHIARQLEYWLGGRERLQPKHAPLMKTLVTALQQDIDHTTLIQLSQIPAGQSPLLLMISADNEFNQSIVAVAASRGIRIQIAPTPDIAPAMLTNEPVLDGFGEDPDVILMRLPSMPSRAEVIEQPNSELSNIWKTLQTFAERYPKLPIVVIGDRGEMSDRLEAMRRGGKLFLVTPTPPEQIVDTVVNLLRDPEIPNKVMILDDDQDWLRTLPTLLKPWGFKVTTLADPQQFWTVLQAVTPDALVLDVNMPQINGFELCQLLRSDPHWQRLPVLFLSVLTDPTTQNQAFAVGGDDYLCKPVKGVELANRILRRLQRVRAWAN</sequence>
<reference key="1">
    <citation type="journal article" date="1992" name="Proc. Natl. Acad. Sci. U.S.A.">
        <title>Complementation of a red-light-indifferent cyanobacterial mutant.</title>
        <authorList>
            <person name="Chiang G.G."/>
            <person name="Schaefer M.R."/>
            <person name="Grossman A.R."/>
        </authorList>
    </citation>
    <scope>NUCLEOTIDE SEQUENCE [GENOMIC DNA]</scope>
    <source>
        <strain>FD33</strain>
    </source>
</reference>
<evidence type="ECO:0000255" key="1">
    <source>
        <dbReference type="PROSITE-ProRule" id="PRU00169"/>
    </source>
</evidence>
<evidence type="ECO:0000255" key="2">
    <source>
        <dbReference type="PROSITE-ProRule" id="PRU01091"/>
    </source>
</evidence>
<accession>Q01473</accession>
<comment type="function">
    <text>Required for chromatic adaptation. Thought to be a positive regulator of phycobiliproteins.</text>
</comment>